<evidence type="ECO:0000305" key="1"/>
<comment type="similarity">
    <text evidence="1">Belongs to the transferase hexapeptide repeat family.</text>
</comment>
<dbReference type="EC" id="2.3.1.-"/>
<dbReference type="EMBL" id="BA000018">
    <property type="protein sequence ID" value="BAB43646.1"/>
    <property type="molecule type" value="Genomic_DNA"/>
</dbReference>
<dbReference type="PIR" id="D90060">
    <property type="entry name" value="D90060"/>
</dbReference>
<dbReference type="RefSeq" id="WP_000136487.1">
    <property type="nucleotide sequence ID" value="NC_002745.2"/>
</dbReference>
<dbReference type="SMR" id="Q7A3E8"/>
<dbReference type="EnsemblBacteria" id="BAB43646">
    <property type="protein sequence ID" value="BAB43646"/>
    <property type="gene ID" value="BAB43646"/>
</dbReference>
<dbReference type="KEGG" id="sau:SA2342"/>
<dbReference type="HOGENOM" id="CLU_051638_3_0_9"/>
<dbReference type="GO" id="GO:0008870">
    <property type="term" value="F:galactoside O-acetyltransferase activity"/>
    <property type="evidence" value="ECO:0007669"/>
    <property type="project" value="TreeGrafter"/>
</dbReference>
<dbReference type="CDD" id="cd03357">
    <property type="entry name" value="LbH_MAT_GAT"/>
    <property type="match status" value="1"/>
</dbReference>
<dbReference type="FunFam" id="2.160.10.10:FF:000008">
    <property type="entry name" value="Maltose O-acetyltransferase"/>
    <property type="match status" value="1"/>
</dbReference>
<dbReference type="Gene3D" id="2.160.10.10">
    <property type="entry name" value="Hexapeptide repeat proteins"/>
    <property type="match status" value="1"/>
</dbReference>
<dbReference type="InterPro" id="IPR001451">
    <property type="entry name" value="Hexapep"/>
</dbReference>
<dbReference type="InterPro" id="IPR039369">
    <property type="entry name" value="LacA-like"/>
</dbReference>
<dbReference type="InterPro" id="IPR024688">
    <property type="entry name" value="Mac_dom"/>
</dbReference>
<dbReference type="InterPro" id="IPR011004">
    <property type="entry name" value="Trimer_LpxA-like_sf"/>
</dbReference>
<dbReference type="PANTHER" id="PTHR43017:SF1">
    <property type="entry name" value="ACETYLTRANSFERASE YJL218W-RELATED"/>
    <property type="match status" value="1"/>
</dbReference>
<dbReference type="PANTHER" id="PTHR43017">
    <property type="entry name" value="GALACTOSIDE O-ACETYLTRANSFERASE"/>
    <property type="match status" value="1"/>
</dbReference>
<dbReference type="Pfam" id="PF00132">
    <property type="entry name" value="Hexapep"/>
    <property type="match status" value="1"/>
</dbReference>
<dbReference type="Pfam" id="PF14602">
    <property type="entry name" value="Hexapep_2"/>
    <property type="match status" value="1"/>
</dbReference>
<dbReference type="Pfam" id="PF12464">
    <property type="entry name" value="Mac"/>
    <property type="match status" value="1"/>
</dbReference>
<dbReference type="SMART" id="SM01266">
    <property type="entry name" value="Mac"/>
    <property type="match status" value="1"/>
</dbReference>
<dbReference type="SUPFAM" id="SSF51161">
    <property type="entry name" value="Trimeric LpxA-like enzymes"/>
    <property type="match status" value="1"/>
</dbReference>
<organism>
    <name type="scientific">Staphylococcus aureus (strain N315)</name>
    <dbReference type="NCBI Taxonomy" id="158879"/>
    <lineage>
        <taxon>Bacteria</taxon>
        <taxon>Bacillati</taxon>
        <taxon>Bacillota</taxon>
        <taxon>Bacilli</taxon>
        <taxon>Bacillales</taxon>
        <taxon>Staphylococcaceae</taxon>
        <taxon>Staphylococcus</taxon>
    </lineage>
</organism>
<sequence>MTEKEKMLAEKWYDANFDQDLINERARAKDICFELNHTKPSDTNKRKELIDQLFQTTTDNVSISIPFDTDYGWNVKLGKNVYVNTNCYFMDGGQITIGDNVFIGPNCGFYTATHPLNFYHRNEGYEKAGPIHIGSNTWFGGHVAVLPGVTIGEGSVIGAGSVVTKDIPPHSLAVGNPCKVVRKIDNDLPSETLNDETIK</sequence>
<name>ATRF2_STAAN</name>
<feature type="chain" id="PRO_0000068754" description="Putative acetyltransferase SA2342">
    <location>
        <begin position="1"/>
        <end position="199"/>
    </location>
</feature>
<keyword id="KW-0012">Acyltransferase</keyword>
<keyword id="KW-0677">Repeat</keyword>
<keyword id="KW-0808">Transferase</keyword>
<protein>
    <recommendedName>
        <fullName>Putative acetyltransferase SA2342</fullName>
        <ecNumber>2.3.1.-</ecNumber>
    </recommendedName>
</protein>
<accession>Q7A3E8</accession>
<reference key="1">
    <citation type="journal article" date="2001" name="Lancet">
        <title>Whole genome sequencing of meticillin-resistant Staphylococcus aureus.</title>
        <authorList>
            <person name="Kuroda M."/>
            <person name="Ohta T."/>
            <person name="Uchiyama I."/>
            <person name="Baba T."/>
            <person name="Yuzawa H."/>
            <person name="Kobayashi I."/>
            <person name="Cui L."/>
            <person name="Oguchi A."/>
            <person name="Aoki K."/>
            <person name="Nagai Y."/>
            <person name="Lian J.-Q."/>
            <person name="Ito T."/>
            <person name="Kanamori M."/>
            <person name="Matsumaru H."/>
            <person name="Maruyama A."/>
            <person name="Murakami H."/>
            <person name="Hosoyama A."/>
            <person name="Mizutani-Ui Y."/>
            <person name="Takahashi N.K."/>
            <person name="Sawano T."/>
            <person name="Inoue R."/>
            <person name="Kaito C."/>
            <person name="Sekimizu K."/>
            <person name="Hirakawa H."/>
            <person name="Kuhara S."/>
            <person name="Goto S."/>
            <person name="Yabuzaki J."/>
            <person name="Kanehisa M."/>
            <person name="Yamashita A."/>
            <person name="Oshima K."/>
            <person name="Furuya K."/>
            <person name="Yoshino C."/>
            <person name="Shiba T."/>
            <person name="Hattori M."/>
            <person name="Ogasawara N."/>
            <person name="Hayashi H."/>
            <person name="Hiramatsu K."/>
        </authorList>
    </citation>
    <scope>NUCLEOTIDE SEQUENCE [LARGE SCALE GENOMIC DNA]</scope>
    <source>
        <strain>N315</strain>
    </source>
</reference>
<reference key="2">
    <citation type="submission" date="2007-10" db="UniProtKB">
        <title>Shotgun proteomic analysis of total and membrane protein extracts of S. aureus strain N315.</title>
        <authorList>
            <person name="Vaezzadeh A.R."/>
            <person name="Deshusses J."/>
            <person name="Lescuyer P."/>
            <person name="Hochstrasser D.F."/>
        </authorList>
    </citation>
    <scope>IDENTIFICATION BY MASS SPECTROMETRY [LARGE SCALE ANALYSIS]</scope>
    <source>
        <strain>N315</strain>
    </source>
</reference>
<gene>
    <name type="ordered locus">SA2342</name>
</gene>
<proteinExistence type="evidence at protein level"/>